<proteinExistence type="evidence at protein level"/>
<name>PP202_ARATH</name>
<accession>O22137</accession>
<keyword id="KW-0150">Chloroplast</keyword>
<keyword id="KW-0507">mRNA processing</keyword>
<keyword id="KW-0934">Plastid</keyword>
<keyword id="KW-1185">Reference proteome</keyword>
<keyword id="KW-0677">Repeat</keyword>
<keyword id="KW-0694">RNA-binding</keyword>
<keyword id="KW-0809">Transit peptide</keyword>
<organism>
    <name type="scientific">Arabidopsis thaliana</name>
    <name type="common">Mouse-ear cress</name>
    <dbReference type="NCBI Taxonomy" id="3702"/>
    <lineage>
        <taxon>Eukaryota</taxon>
        <taxon>Viridiplantae</taxon>
        <taxon>Streptophyta</taxon>
        <taxon>Embryophyta</taxon>
        <taxon>Tracheophyta</taxon>
        <taxon>Spermatophyta</taxon>
        <taxon>Magnoliopsida</taxon>
        <taxon>eudicotyledons</taxon>
        <taxon>Gunneridae</taxon>
        <taxon>Pentapetalae</taxon>
        <taxon>rosids</taxon>
        <taxon>malvids</taxon>
        <taxon>Brassicales</taxon>
        <taxon>Brassicaceae</taxon>
        <taxon>Camelineae</taxon>
        <taxon>Arabidopsis</taxon>
    </lineage>
</organism>
<reference key="1">
    <citation type="journal article" date="1999" name="Nature">
        <title>Sequence and analysis of chromosome 2 of the plant Arabidopsis thaliana.</title>
        <authorList>
            <person name="Lin X."/>
            <person name="Kaul S."/>
            <person name="Rounsley S.D."/>
            <person name="Shea T.P."/>
            <person name="Benito M.-I."/>
            <person name="Town C.D."/>
            <person name="Fujii C.Y."/>
            <person name="Mason T.M."/>
            <person name="Bowman C.L."/>
            <person name="Barnstead M.E."/>
            <person name="Feldblyum T.V."/>
            <person name="Buell C.R."/>
            <person name="Ketchum K.A."/>
            <person name="Lee J.J."/>
            <person name="Ronning C.M."/>
            <person name="Koo H.L."/>
            <person name="Moffat K.S."/>
            <person name="Cronin L.A."/>
            <person name="Shen M."/>
            <person name="Pai G."/>
            <person name="Van Aken S."/>
            <person name="Umayam L."/>
            <person name="Tallon L.J."/>
            <person name="Gill J.E."/>
            <person name="Adams M.D."/>
            <person name="Carrera A.J."/>
            <person name="Creasy T.H."/>
            <person name="Goodman H.M."/>
            <person name="Somerville C.R."/>
            <person name="Copenhaver G.P."/>
            <person name="Preuss D."/>
            <person name="Nierman W.C."/>
            <person name="White O."/>
            <person name="Eisen J.A."/>
            <person name="Salzberg S.L."/>
            <person name="Fraser C.M."/>
            <person name="Venter J.C."/>
        </authorList>
    </citation>
    <scope>NUCLEOTIDE SEQUENCE [LARGE SCALE GENOMIC DNA]</scope>
    <source>
        <strain>cv. Columbia</strain>
    </source>
</reference>
<reference key="2">
    <citation type="journal article" date="2017" name="Plant J.">
        <title>Araport11: a complete reannotation of the Arabidopsis thaliana reference genome.</title>
        <authorList>
            <person name="Cheng C.Y."/>
            <person name="Krishnakumar V."/>
            <person name="Chan A.P."/>
            <person name="Thibaud-Nissen F."/>
            <person name="Schobel S."/>
            <person name="Town C.D."/>
        </authorList>
    </citation>
    <scope>GENOME REANNOTATION</scope>
    <source>
        <strain>cv. Columbia</strain>
    </source>
</reference>
<reference key="3">
    <citation type="journal article" date="2000" name="Plant Mol. Biol.">
        <title>In Arabidopsis thaliana, 1% of the genome codes for a novel protein family unique to plants.</title>
        <authorList>
            <person name="Aubourg S."/>
            <person name="Boudet N."/>
            <person name="Kreis M."/>
            <person name="Lecharny A."/>
        </authorList>
    </citation>
    <scope>GENE FAMILY</scope>
</reference>
<reference key="4">
    <citation type="journal article" date="2004" name="Plant Cell">
        <title>Genome-wide analysis of Arabidopsis pentatricopeptide repeat proteins reveals their essential role in organelle biogenesis.</title>
        <authorList>
            <person name="Lurin C."/>
            <person name="Andres C."/>
            <person name="Aubourg S."/>
            <person name="Bellaoui M."/>
            <person name="Bitton F."/>
            <person name="Bruyere C."/>
            <person name="Caboche M."/>
            <person name="Debast C."/>
            <person name="Gualberto J."/>
            <person name="Hoffmann B."/>
            <person name="Lecharny A."/>
            <person name="Le Ret M."/>
            <person name="Martin-Magniette M.-L."/>
            <person name="Mireau H."/>
            <person name="Peeters N."/>
            <person name="Renou J.-P."/>
            <person name="Szurek B."/>
            <person name="Taconnat L."/>
            <person name="Small I."/>
        </authorList>
    </citation>
    <scope>GENE FAMILY</scope>
</reference>
<reference key="5">
    <citation type="journal article" date="2005" name="Nature">
        <title>A pentatricopeptide repeat protein is essential for RNA editing in chloroplasts.</title>
        <authorList>
            <person name="Kotera E."/>
            <person name="Tasaka M."/>
            <person name="Shikanai T."/>
        </authorList>
    </citation>
    <scope>FUNCTION</scope>
</reference>
<reference key="6">
    <citation type="journal article" date="2006" name="J. Biol. Chem.">
        <title>A pentatricopeptide repeat protein is a site recognition factor in chloroplast RNA editing.</title>
        <authorList>
            <person name="Okuda K."/>
            <person name="Nakamura T."/>
            <person name="Sugita M."/>
            <person name="Shimizu T."/>
            <person name="Shikanai T."/>
        </authorList>
    </citation>
    <scope>FUNCTION</scope>
    <scope>SUBCELLULAR LOCATION</scope>
</reference>
<reference key="7">
    <citation type="journal article" date="2012" name="Plant Cell">
        <title>Two interacting proteins are necessary for the editing of the NdhD-1 site in Arabidopsis plastids.</title>
        <authorList>
            <person name="Boussardon C."/>
            <person name="Salone V."/>
            <person name="Avon A."/>
            <person name="Berthome R."/>
            <person name="Hammani K."/>
            <person name="Okuda K."/>
            <person name="Shikanai T."/>
            <person name="Small I."/>
            <person name="Lurin C."/>
        </authorList>
    </citation>
    <scope>FUNCTION</scope>
    <scope>INTERACTION WITH DYW1</scope>
    <scope>SUBCELLULAR LOCATION</scope>
</reference>
<protein>
    <recommendedName>
        <fullName>Pentatricopeptide repeat-containing protein At2g45350, chloroplastic</fullName>
    </recommendedName>
    <alternativeName>
        <fullName>Protein CHLORORESPIRATORY REDUCTION 4</fullName>
    </alternativeName>
</protein>
<comment type="function">
    <text evidence="2 3 4">Plays a major role in chloroplast RNA editing. Acts as a site-recognition transacting factor to recruit C-deaminase (PubMed:15662426, PubMed:17015439). Involved in single RNA editing events. Required for the edition of the site 1 of ndhD (ndhD-1 site corresponding to cytidine-2), which is a plastid-encoded subunit of the NADH-plastoquinone oxidoreductase. The interaction with DYW1 is required for its function in editing the ndhD-1 site (PubMed:23001034).</text>
</comment>
<comment type="subunit">
    <text evidence="4">Interacts with DYW1.</text>
</comment>
<comment type="subcellular location">
    <subcellularLocation>
        <location evidence="3 4">Plastid</location>
        <location evidence="3 4">Chloroplast</location>
    </subcellularLocation>
</comment>
<comment type="miscellaneous">
    <text evidence="6">Unlike other RNA editing factors, CCR4 does not contain identifiable E(+) and DYW motifs but does contain PPR repeats. Therefore its association with DYW1, which lacks PPR repeats, but does contain E(+) and DYW motifs, is required for its function in RNA editing.</text>
</comment>
<comment type="similarity">
    <text evidence="5">Belongs to the PPR family. PCMP-E subfamily.</text>
</comment>
<comment type="sequence caution" evidence="5">
    <conflict type="erroneous initiation">
        <sequence resource="EMBL-CDS" id="AAB82628"/>
    </conflict>
    <text>Truncated N-terminus.</text>
</comment>
<comment type="online information" name="Pentatricopeptide repeat proteins">
    <link uri="https://ppr.plantenergy.uwa.edu.au"/>
</comment>
<dbReference type="EMBL" id="AC002387">
    <property type="protein sequence ID" value="AAB82628.1"/>
    <property type="status" value="ALT_INIT"/>
    <property type="molecule type" value="Genomic_DNA"/>
</dbReference>
<dbReference type="EMBL" id="CP002685">
    <property type="protein sequence ID" value="AEC10542.1"/>
    <property type="molecule type" value="Genomic_DNA"/>
</dbReference>
<dbReference type="PIR" id="E84889">
    <property type="entry name" value="E84889"/>
</dbReference>
<dbReference type="RefSeq" id="NP_182060.2">
    <property type="nucleotide sequence ID" value="NM_130098.3"/>
</dbReference>
<dbReference type="SMR" id="O22137"/>
<dbReference type="BioGRID" id="4479">
    <property type="interactions" value="1"/>
</dbReference>
<dbReference type="FunCoup" id="O22137">
    <property type="interactions" value="477"/>
</dbReference>
<dbReference type="STRING" id="3702.O22137"/>
<dbReference type="iPTMnet" id="O22137"/>
<dbReference type="PaxDb" id="3702-AT2G45350.1"/>
<dbReference type="EnsemblPlants" id="AT2G45350.1">
    <property type="protein sequence ID" value="AT2G45350.1"/>
    <property type="gene ID" value="AT2G45350"/>
</dbReference>
<dbReference type="GeneID" id="819143"/>
<dbReference type="Gramene" id="AT2G45350.1">
    <property type="protein sequence ID" value="AT2G45350.1"/>
    <property type="gene ID" value="AT2G45350"/>
</dbReference>
<dbReference type="KEGG" id="ath:AT2G45350"/>
<dbReference type="Araport" id="AT2G45350"/>
<dbReference type="TAIR" id="AT2G45350">
    <property type="gene designation" value="CRR4"/>
</dbReference>
<dbReference type="eggNOG" id="KOG4197">
    <property type="taxonomic scope" value="Eukaryota"/>
</dbReference>
<dbReference type="HOGENOM" id="CLU_002706_37_2_1"/>
<dbReference type="InParanoid" id="O22137"/>
<dbReference type="OMA" id="SVDHWNA"/>
<dbReference type="PhylomeDB" id="O22137"/>
<dbReference type="PRO" id="PR:O22137"/>
<dbReference type="Proteomes" id="UP000006548">
    <property type="component" value="Chromosome 2"/>
</dbReference>
<dbReference type="ExpressionAtlas" id="O22137">
    <property type="expression patterns" value="baseline and differential"/>
</dbReference>
<dbReference type="GO" id="GO:0009507">
    <property type="term" value="C:chloroplast"/>
    <property type="evidence" value="ECO:0000314"/>
    <property type="project" value="UniProtKB"/>
</dbReference>
<dbReference type="GO" id="GO:0005773">
    <property type="term" value="C:vacuole"/>
    <property type="evidence" value="ECO:0007005"/>
    <property type="project" value="TAIR"/>
</dbReference>
<dbReference type="GO" id="GO:0003723">
    <property type="term" value="F:RNA binding"/>
    <property type="evidence" value="ECO:0007669"/>
    <property type="project" value="UniProtKB-KW"/>
</dbReference>
<dbReference type="GO" id="GO:1900865">
    <property type="term" value="P:chloroplast RNA modification"/>
    <property type="evidence" value="ECO:0000315"/>
    <property type="project" value="UniProtKB"/>
</dbReference>
<dbReference type="GO" id="GO:0016556">
    <property type="term" value="P:mRNA modification"/>
    <property type="evidence" value="ECO:0000315"/>
    <property type="project" value="TAIR"/>
</dbReference>
<dbReference type="GO" id="GO:0006397">
    <property type="term" value="P:mRNA processing"/>
    <property type="evidence" value="ECO:0007669"/>
    <property type="project" value="UniProtKB-KW"/>
</dbReference>
<dbReference type="FunFam" id="1.25.40.10:FF:001047">
    <property type="entry name" value="Chlororespiratory reduction 4"/>
    <property type="match status" value="1"/>
</dbReference>
<dbReference type="FunFam" id="1.25.40.10:FF:002157">
    <property type="entry name" value="Pentatricopeptide repeat-containing protein At2g45350, chloroplastic"/>
    <property type="match status" value="1"/>
</dbReference>
<dbReference type="FunFam" id="1.25.40.10:FF:000277">
    <property type="entry name" value="Pentatricopeptide repeat-containing protein, mitochondrial"/>
    <property type="match status" value="1"/>
</dbReference>
<dbReference type="Gene3D" id="1.25.40.10">
    <property type="entry name" value="Tetratricopeptide repeat domain"/>
    <property type="match status" value="4"/>
</dbReference>
<dbReference type="InterPro" id="IPR046848">
    <property type="entry name" value="E_motif"/>
</dbReference>
<dbReference type="InterPro" id="IPR002885">
    <property type="entry name" value="Pentatricopeptide_rpt"/>
</dbReference>
<dbReference type="InterPro" id="IPR046960">
    <property type="entry name" value="PPR_At4g14850-like_plant"/>
</dbReference>
<dbReference type="InterPro" id="IPR011990">
    <property type="entry name" value="TPR-like_helical_dom_sf"/>
</dbReference>
<dbReference type="NCBIfam" id="TIGR00756">
    <property type="entry name" value="PPR"/>
    <property type="match status" value="5"/>
</dbReference>
<dbReference type="PANTHER" id="PTHR47926">
    <property type="entry name" value="PENTATRICOPEPTIDE REPEAT-CONTAINING PROTEIN"/>
    <property type="match status" value="1"/>
</dbReference>
<dbReference type="PANTHER" id="PTHR47926:SF456">
    <property type="entry name" value="PENTATRICOPEPTIDE REPEAT-CONTAINING PROTEIN ELI1, CHLOROPLASTIC"/>
    <property type="match status" value="1"/>
</dbReference>
<dbReference type="Pfam" id="PF20431">
    <property type="entry name" value="E_motif"/>
    <property type="match status" value="1"/>
</dbReference>
<dbReference type="Pfam" id="PF01535">
    <property type="entry name" value="PPR"/>
    <property type="match status" value="9"/>
</dbReference>
<dbReference type="Pfam" id="PF13041">
    <property type="entry name" value="PPR_2"/>
    <property type="match status" value="1"/>
</dbReference>
<dbReference type="PROSITE" id="PS51375">
    <property type="entry name" value="PPR"/>
    <property type="match status" value="14"/>
</dbReference>
<evidence type="ECO:0000255" key="1"/>
<evidence type="ECO:0000269" key="2">
    <source>
    </source>
</evidence>
<evidence type="ECO:0000269" key="3">
    <source>
    </source>
</evidence>
<evidence type="ECO:0000269" key="4">
    <source>
    </source>
</evidence>
<evidence type="ECO:0000305" key="5"/>
<evidence type="ECO:0000305" key="6">
    <source>
    </source>
</evidence>
<gene>
    <name type="primary">CRR4</name>
    <name type="synonym">PCMP-E11</name>
    <name type="ordered locus">At2g45350</name>
    <name type="ORF">F4L23.14</name>
</gene>
<feature type="transit peptide" description="Chloroplast" evidence="1">
    <location>
        <begin position="1"/>
        <end status="unknown"/>
    </location>
</feature>
<feature type="chain" id="PRO_0000356061" description="Pentatricopeptide repeat-containing protein At2g45350, chloroplastic">
    <location>
        <begin status="unknown"/>
        <end position="613"/>
    </location>
</feature>
<feature type="repeat" description="PPR 1">
    <location>
        <begin position="85"/>
        <end position="119"/>
    </location>
</feature>
<feature type="repeat" description="PPR 2">
    <location>
        <begin position="120"/>
        <end position="154"/>
    </location>
</feature>
<feature type="repeat" description="PPR 3">
    <location>
        <begin position="155"/>
        <end position="185"/>
    </location>
</feature>
<feature type="repeat" description="PPR 4">
    <location>
        <begin position="186"/>
        <end position="216"/>
    </location>
</feature>
<feature type="repeat" description="PPR 5">
    <location>
        <begin position="219"/>
        <end position="250"/>
    </location>
</feature>
<feature type="repeat" description="PPR 6">
    <location>
        <begin position="251"/>
        <end position="285"/>
    </location>
</feature>
<feature type="repeat" description="PPR 7">
    <location>
        <begin position="286"/>
        <end position="312"/>
    </location>
</feature>
<feature type="repeat" description="PPR 8">
    <location>
        <begin position="313"/>
        <end position="347"/>
    </location>
</feature>
<feature type="repeat" description="PPR 9">
    <location>
        <begin position="349"/>
        <end position="383"/>
    </location>
</feature>
<feature type="repeat" description="PPR 10">
    <location>
        <begin position="384"/>
        <end position="414"/>
    </location>
</feature>
<feature type="repeat" description="PPR 11">
    <location>
        <begin position="415"/>
        <end position="449"/>
    </location>
</feature>
<feature type="repeat" description="PPR 12">
    <location>
        <begin position="450"/>
        <end position="480"/>
    </location>
</feature>
<feature type="repeat" description="PPR 13">
    <location>
        <begin position="486"/>
        <end position="516"/>
    </location>
</feature>
<feature type="region of interest" description="Type E motif">
    <location>
        <begin position="521"/>
        <end position="596"/>
    </location>
</feature>
<sequence>MLVFKSTMECSISSTIHVLGSCKTSDDVNQIHGRLIKTGIIKNSNLTTRIVLAFASSRRPYLADFARCVFHEYHVCSFSFGEVEDPFLWNAVIKSHSHGKDPRQALLLLCLMLENGVSVDKFSLSLVLKACSRLGFVKGGMQIHGFLKKTGLWSDLFLQNCLIGLYLKCGCLGLSRQMFDRMPKRDSVSYNSMIDGYVKCGLIVSARELFDLMPMEMKNLISWNSMISGYAQTSDGVDIASKLFADMPEKDLISWNSMIDGYVKHGRIEDAKGLFDVMPRRDVVTWATMIDGYAKLGFVHHAKTLFDQMPHRDVVAYNSMMAGYVQNKYHMEALEIFSDMEKESHLLPDDTTLVIVLPAIAQLGRLSKAIDMHLYIVEKQFYLGGKLGVALIDMYSKCGSIQHAMLVFEGIENKSIDHWNAMIGGLAIHGLGESAFDMLLQIERLSLKPDDITFVGVLNACSHSGLVKEGLLCFELMRRKHKIEPRLQHYGCMVDILSRSGSIELAKNLIEEMPVEPNDVIWRTFLTACSHHKEFETGELVAKHLILQAGYNPSSYVLLSNMYASFGMWKDVRRVRTMMKERKIEKIPGCSWIELDGRVHEFFVDSIEVSSTL</sequence>